<protein>
    <recommendedName>
        <fullName>Ubiquitin carboxyl-terminal hydrolase 37</fullName>
        <ecNumber evidence="10 11 12 14">3.4.19.12</ecNumber>
    </recommendedName>
    <alternativeName>
        <fullName>Deubiquitinating enzyme 37</fullName>
    </alternativeName>
    <alternativeName>
        <fullName>Ubiquitin thioesterase 37</fullName>
    </alternativeName>
    <alternativeName>
        <fullName>Ubiquitin-specific-processing protease 37</fullName>
    </alternativeName>
</protein>
<accession>Q86T82</accession>
<accession>A2RUQ8</accession>
<accession>B7ZM38</accession>
<accession>B7ZM41</accession>
<accession>E9PHL3</accession>
<accession>Q2KHT2</accession>
<accession>Q53S10</accession>
<accession>Q7Z3A5</accession>
<accession>Q9HCH8</accession>
<reference key="1">
    <citation type="journal article" date="2007" name="BMC Genomics">
        <title>The full-ORF clone resource of the German cDNA consortium.</title>
        <authorList>
            <person name="Bechtel S."/>
            <person name="Rosenfelder H."/>
            <person name="Duda A."/>
            <person name="Schmidt C.P."/>
            <person name="Ernst U."/>
            <person name="Wellenreuther R."/>
            <person name="Mehrle A."/>
            <person name="Schuster C."/>
            <person name="Bahr A."/>
            <person name="Bloecker H."/>
            <person name="Heubner D."/>
            <person name="Hoerlein A."/>
            <person name="Michel G."/>
            <person name="Wedler H."/>
            <person name="Koehrer K."/>
            <person name="Ottenwaelder B."/>
            <person name="Poustka A."/>
            <person name="Wiemann S."/>
            <person name="Schupp I."/>
        </authorList>
    </citation>
    <scope>NUCLEOTIDE SEQUENCE [LARGE SCALE MRNA] (ISOFORM 1)</scope>
    <scope>VARIANT SER-979</scope>
    <source>
        <tissue>Spinal cord</tissue>
    </source>
</reference>
<reference key="2">
    <citation type="journal article" date="2005" name="Nature">
        <title>Generation and annotation of the DNA sequences of human chromosomes 2 and 4.</title>
        <authorList>
            <person name="Hillier L.W."/>
            <person name="Graves T.A."/>
            <person name="Fulton R.S."/>
            <person name="Fulton L.A."/>
            <person name="Pepin K.H."/>
            <person name="Minx P."/>
            <person name="Wagner-McPherson C."/>
            <person name="Layman D."/>
            <person name="Wylie K."/>
            <person name="Sekhon M."/>
            <person name="Becker M.C."/>
            <person name="Fewell G.A."/>
            <person name="Delehaunty K.D."/>
            <person name="Miner T.L."/>
            <person name="Nash W.E."/>
            <person name="Kremitzki C."/>
            <person name="Oddy L."/>
            <person name="Du H."/>
            <person name="Sun H."/>
            <person name="Bradshaw-Cordum H."/>
            <person name="Ali J."/>
            <person name="Carter J."/>
            <person name="Cordes M."/>
            <person name="Harris A."/>
            <person name="Isak A."/>
            <person name="van Brunt A."/>
            <person name="Nguyen C."/>
            <person name="Du F."/>
            <person name="Courtney L."/>
            <person name="Kalicki J."/>
            <person name="Ozersky P."/>
            <person name="Abbott S."/>
            <person name="Armstrong J."/>
            <person name="Belter E.A."/>
            <person name="Caruso L."/>
            <person name="Cedroni M."/>
            <person name="Cotton M."/>
            <person name="Davidson T."/>
            <person name="Desai A."/>
            <person name="Elliott G."/>
            <person name="Erb T."/>
            <person name="Fronick C."/>
            <person name="Gaige T."/>
            <person name="Haakenson W."/>
            <person name="Haglund K."/>
            <person name="Holmes A."/>
            <person name="Harkins R."/>
            <person name="Kim K."/>
            <person name="Kruchowski S.S."/>
            <person name="Strong C.M."/>
            <person name="Grewal N."/>
            <person name="Goyea E."/>
            <person name="Hou S."/>
            <person name="Levy A."/>
            <person name="Martinka S."/>
            <person name="Mead K."/>
            <person name="McLellan M.D."/>
            <person name="Meyer R."/>
            <person name="Randall-Maher J."/>
            <person name="Tomlinson C."/>
            <person name="Dauphin-Kohlberg S."/>
            <person name="Kozlowicz-Reilly A."/>
            <person name="Shah N."/>
            <person name="Swearengen-Shahid S."/>
            <person name="Snider J."/>
            <person name="Strong J.T."/>
            <person name="Thompson J."/>
            <person name="Yoakum M."/>
            <person name="Leonard S."/>
            <person name="Pearman C."/>
            <person name="Trani L."/>
            <person name="Radionenko M."/>
            <person name="Waligorski J.E."/>
            <person name="Wang C."/>
            <person name="Rock S.M."/>
            <person name="Tin-Wollam A.-M."/>
            <person name="Maupin R."/>
            <person name="Latreille P."/>
            <person name="Wendl M.C."/>
            <person name="Yang S.-P."/>
            <person name="Pohl C."/>
            <person name="Wallis J.W."/>
            <person name="Spieth J."/>
            <person name="Bieri T.A."/>
            <person name="Berkowicz N."/>
            <person name="Nelson J.O."/>
            <person name="Osborne J."/>
            <person name="Ding L."/>
            <person name="Meyer R."/>
            <person name="Sabo A."/>
            <person name="Shotland Y."/>
            <person name="Sinha P."/>
            <person name="Wohldmann P.E."/>
            <person name="Cook L.L."/>
            <person name="Hickenbotham M.T."/>
            <person name="Eldred J."/>
            <person name="Williams D."/>
            <person name="Jones T.A."/>
            <person name="She X."/>
            <person name="Ciccarelli F.D."/>
            <person name="Izaurralde E."/>
            <person name="Taylor J."/>
            <person name="Schmutz J."/>
            <person name="Myers R.M."/>
            <person name="Cox D.R."/>
            <person name="Huang X."/>
            <person name="McPherson J.D."/>
            <person name="Mardis E.R."/>
            <person name="Clifton S.W."/>
            <person name="Warren W.C."/>
            <person name="Chinwalla A.T."/>
            <person name="Eddy S.R."/>
            <person name="Marra M.A."/>
            <person name="Ovcharenko I."/>
            <person name="Furey T.S."/>
            <person name="Miller W."/>
            <person name="Eichler E.E."/>
            <person name="Bork P."/>
            <person name="Suyama M."/>
            <person name="Torrents D."/>
            <person name="Waterston R.H."/>
            <person name="Wilson R.K."/>
        </authorList>
    </citation>
    <scope>NUCLEOTIDE SEQUENCE [LARGE SCALE GENOMIC DNA]</scope>
</reference>
<reference key="3">
    <citation type="submission" date="2005-07" db="EMBL/GenBank/DDBJ databases">
        <authorList>
            <person name="Mural R.J."/>
            <person name="Istrail S."/>
            <person name="Sutton G.G."/>
            <person name="Florea L."/>
            <person name="Halpern A.L."/>
            <person name="Mobarry C.M."/>
            <person name="Lippert R."/>
            <person name="Walenz B."/>
            <person name="Shatkay H."/>
            <person name="Dew I."/>
            <person name="Miller J.R."/>
            <person name="Flanigan M.J."/>
            <person name="Edwards N.J."/>
            <person name="Bolanos R."/>
            <person name="Fasulo D."/>
            <person name="Halldorsson B.V."/>
            <person name="Hannenhalli S."/>
            <person name="Turner R."/>
            <person name="Yooseph S."/>
            <person name="Lu F."/>
            <person name="Nusskern D.R."/>
            <person name="Shue B.C."/>
            <person name="Zheng X.H."/>
            <person name="Zhong F."/>
            <person name="Delcher A.L."/>
            <person name="Huson D.H."/>
            <person name="Kravitz S.A."/>
            <person name="Mouchard L."/>
            <person name="Reinert K."/>
            <person name="Remington K.A."/>
            <person name="Clark A.G."/>
            <person name="Waterman M.S."/>
            <person name="Eichler E.E."/>
            <person name="Adams M.D."/>
            <person name="Hunkapiller M.W."/>
            <person name="Myers E.W."/>
            <person name="Venter J.C."/>
        </authorList>
    </citation>
    <scope>NUCLEOTIDE SEQUENCE [LARGE SCALE GENOMIC DNA]</scope>
    <scope>VARIANT SER-979</scope>
</reference>
<reference key="4">
    <citation type="journal article" date="2004" name="Genome Res.">
        <title>The status, quality, and expansion of the NIH full-length cDNA project: the Mammalian Gene Collection (MGC).</title>
        <authorList>
            <consortium name="The MGC Project Team"/>
        </authorList>
    </citation>
    <scope>NUCLEOTIDE SEQUENCE [LARGE SCALE MRNA] (ISOFORMS 1 AND 2)</scope>
    <scope>VARIANT SER-979</scope>
    <source>
        <tissue>Testis</tissue>
    </source>
</reference>
<reference key="5">
    <citation type="journal article" date="2000" name="DNA Res.">
        <title>Prediction of the coding sequences of unidentified human genes. XVIII. The complete sequences of 100 new cDNA clones from brain which code for large proteins in vitro.</title>
        <authorList>
            <person name="Nagase T."/>
            <person name="Kikuno R."/>
            <person name="Nakayama M."/>
            <person name="Hirosawa M."/>
            <person name="Ohara O."/>
        </authorList>
    </citation>
    <scope>NUCLEOTIDE SEQUENCE [LARGE SCALE MRNA] OF 49-979 (ISOFORM 1)</scope>
    <scope>VARIANT SER-979</scope>
    <source>
        <tissue>Brain</tissue>
    </source>
</reference>
<reference key="6">
    <citation type="journal article" date="2004" name="Biochem. Biophys. Res. Commun.">
        <title>Cloning and enzymatic analysis of 22 novel human ubiquitin-specific proteases.</title>
        <authorList>
            <person name="Quesada V."/>
            <person name="Diaz-Perales A."/>
            <person name="Gutierrez-Fernandez A."/>
            <person name="Garabaya C."/>
            <person name="Cal S."/>
            <person name="Lopez-Otin C."/>
        </authorList>
    </citation>
    <scope>TISSUE SPECIFICITY</scope>
    <scope>ENZYME ACTIVITY</scope>
</reference>
<reference key="7">
    <citation type="journal article" date="2008" name="Proc. Natl. Acad. Sci. U.S.A.">
        <title>A quantitative atlas of mitotic phosphorylation.</title>
        <authorList>
            <person name="Dephoure N."/>
            <person name="Zhou C."/>
            <person name="Villen J."/>
            <person name="Beausoleil S.A."/>
            <person name="Bakalarski C.E."/>
            <person name="Elledge S.J."/>
            <person name="Gygi S.P."/>
        </authorList>
    </citation>
    <scope>PHOSPHORYLATION [LARGE SCALE ANALYSIS] AT SER-650 AND SER-652</scope>
    <scope>IDENTIFICATION BY MASS SPECTROMETRY [LARGE SCALE ANALYSIS]</scope>
    <source>
        <tissue>Cervix carcinoma</tissue>
    </source>
</reference>
<reference key="8">
    <citation type="journal article" date="2009" name="Anal. Chem.">
        <title>Lys-N and trypsin cover complementary parts of the phosphoproteome in a refined SCX-based approach.</title>
        <authorList>
            <person name="Gauci S."/>
            <person name="Helbig A.O."/>
            <person name="Slijper M."/>
            <person name="Krijgsveld J."/>
            <person name="Heck A.J."/>
            <person name="Mohammed S."/>
        </authorList>
    </citation>
    <scope>IDENTIFICATION BY MASS SPECTROMETRY [LARGE SCALE ANALYSIS]</scope>
</reference>
<reference key="9">
    <citation type="journal article" date="2011" name="Mol. Cell">
        <title>Deubiquitinase USP37 is activated by CDK2 to antagonize APC(CDH1) and promote S phase entry.</title>
        <authorList>
            <person name="Huang X."/>
            <person name="Summers M.K."/>
            <person name="Pham V."/>
            <person name="Lill J.R."/>
            <person name="Liu J."/>
            <person name="Lee G."/>
            <person name="Kirkpatrick D.S."/>
            <person name="Jackson P.K."/>
            <person name="Fang G."/>
            <person name="Dixit V.M."/>
        </authorList>
    </citation>
    <scope>FUNCTION</scope>
    <scope>UBIQUITINATION</scope>
    <scope>PHOSPHORYLATION AT SER-628 BY CDK2</scope>
    <scope>DOMAIN KEN BOX 3</scope>
    <scope>DEVELOPMENTAL STAGE</scope>
    <scope>INDUCTION</scope>
    <scope>INTERACTION WITH FZR1</scope>
    <scope>MUTAGENESIS OF 32-LYS--ASN-34; 71-ARG-LEU-74; 96-ARG-LEU-99; 160-ARG-LEU-163; 221-LYS--ASN-223; CYS-350; 782-LYS--ASN-784 AND SER-628</scope>
</reference>
<reference key="10">
    <citation type="journal article" date="2013" name="J. Proteome Res.">
        <title>Toward a comprehensive characterization of a human cancer cell phosphoproteome.</title>
        <authorList>
            <person name="Zhou H."/>
            <person name="Di Palma S."/>
            <person name="Preisinger C."/>
            <person name="Peng M."/>
            <person name="Polat A.N."/>
            <person name="Heck A.J."/>
            <person name="Mohammed S."/>
        </authorList>
    </citation>
    <scope>PHOSPHORYLATION [LARGE SCALE ANALYSIS] AT SER-170; SER-210 AND SER-770</scope>
    <scope>IDENTIFICATION BY MASS SPECTROMETRY [LARGE SCALE ANALYSIS]</scope>
    <source>
        <tissue>Cervix carcinoma</tissue>
        <tissue>Erythroleukemia</tissue>
    </source>
</reference>
<reference key="11">
    <citation type="journal article" date="2015" name="Curr. Biol.">
        <title>The Deubiquitinase USP37 Regulates Chromosome Cohesion and Mitotic Progression.</title>
        <authorList>
            <person name="Yeh C."/>
            <person name="Coyaud E."/>
            <person name="Bashkurov M."/>
            <person name="van der Lelij P."/>
            <person name="Cheung S.W."/>
            <person name="Peters J.M."/>
            <person name="Raught B."/>
            <person name="Pelletier L."/>
        </authorList>
    </citation>
    <scope>FUNCTION</scope>
    <scope>CATALYTIC ACTIVITY</scope>
    <scope>MUTAGENESIS OF SER-114 AND CYS-350</scope>
    <scope>SUBCELLULAR LOCATION</scope>
</reference>
<reference key="12">
    <citation type="journal article" date="2016" name="Mol. Oncol.">
        <title>USP37 deubiquitinates Cdt1 and contributes to regulate DNA replication.</title>
        <authorList>
            <person name="Hernandez-Perez S."/>
            <person name="Cabrera E."/>
            <person name="Amoedo H."/>
            <person name="Rodriguez-Acebes S."/>
            <person name="Koundrioukoff S."/>
            <person name="Debatisse M."/>
            <person name="Mendez J."/>
            <person name="Freire R."/>
        </authorList>
    </citation>
    <scope>CATALYTIC ACTIVITY</scope>
    <scope>MUTAGENESIS OF CYS-350</scope>
    <scope>INTERACTION WITH CDT1</scope>
    <scope>FUNCTION</scope>
</reference>
<reference key="13">
    <citation type="journal article" date="2019" name="Am. J. Cancer Res.">
        <title>USP37 is a SNAI1 deubiquitinase.</title>
        <authorList>
            <person name="Xiao Z."/>
            <person name="Chang L."/>
            <person name="Kim J."/>
            <person name="Zhang P."/>
            <person name="Hang Q."/>
            <person name="Yap S."/>
            <person name="Guo Y."/>
            <person name="Zhou Z."/>
            <person name="Zeng L."/>
            <person name="Hu X."/>
            <person name="Siverly A."/>
            <person name="Sun Y."/>
            <person name="Ma L."/>
        </authorList>
    </citation>
    <scope>FUNCTION</scope>
    <scope>CATALYTIC ACTIVITY</scope>
    <scope>MUTAGENESIS OF CYS-350</scope>
</reference>
<reference key="14">
    <citation type="journal article" date="2021" name="Nucleic Acids Res.">
        <title>USP37 regulates DNA damage response through stabilizing and deubiquitinating BLM.</title>
        <authorList>
            <person name="Wu C."/>
            <person name="Chang Y."/>
            <person name="Chen J."/>
            <person name="Su Y."/>
            <person name="Li L."/>
            <person name="Chen Y."/>
            <person name="Li Y."/>
            <person name="Wu J."/>
            <person name="Huang J."/>
            <person name="Zhao F."/>
            <person name="Wang W."/>
            <person name="Yin H."/>
            <person name="Wang S."/>
            <person name="Jin M."/>
            <person name="Lou Z."/>
            <person name="Zhu W.G."/>
            <person name="Luo K."/>
            <person name="Zhang J."/>
            <person name="Yuan J."/>
        </authorList>
    </citation>
    <scope>FUNCTION</scope>
    <scope>CATALYTIC ACTIVITY</scope>
    <scope>PHOSPHORYLATION AT SER-114</scope>
    <scope>MUTAGENESIS OF SER-114</scope>
</reference>
<reference key="15">
    <citation type="journal article" date="2021" name="J. Biol. Chem.">
        <title>The deubiquitinating enzyme USP37 enhances CHK1 activity to promote the cellular response to replication stress.</title>
        <authorList>
            <person name="Stromberg B.R."/>
            <person name="Singh M."/>
            <person name="Torres A.E."/>
            <person name="Burrows A.C."/>
            <person name="Pal D."/>
            <person name="Insinna C."/>
            <person name="Rhee Y."/>
            <person name="Dickson A.S."/>
            <person name="Westlake C.J."/>
            <person name="Summers M.K."/>
        </authorList>
    </citation>
    <scope>FUNCTION</scope>
</reference>
<gene>
    <name type="primary">USP37</name>
    <name type="synonym">KIAA1594</name>
</gene>
<keyword id="KW-0002">3D-structure</keyword>
<keyword id="KW-0025">Alternative splicing</keyword>
<keyword id="KW-0131">Cell cycle</keyword>
<keyword id="KW-0132">Cell division</keyword>
<keyword id="KW-0158">Chromosome</keyword>
<keyword id="KW-0378">Hydrolase</keyword>
<keyword id="KW-0498">Mitosis</keyword>
<keyword id="KW-0539">Nucleus</keyword>
<keyword id="KW-0597">Phosphoprotein</keyword>
<keyword id="KW-0645">Protease</keyword>
<keyword id="KW-1267">Proteomics identification</keyword>
<keyword id="KW-1185">Reference proteome</keyword>
<keyword id="KW-0677">Repeat</keyword>
<keyword id="KW-0788">Thiol protease</keyword>
<keyword id="KW-0832">Ubl conjugation</keyword>
<keyword id="KW-0833">Ubl conjugation pathway</keyword>
<name>UBP37_HUMAN</name>
<sequence>MSPLKIHGPIRIRSMQTGITKWKEGSFEIVEKENKVSLVVHYNTGGIPRIFQLSHNIKNVVLRPSGAKQSRLMLTLQDNSFLSIDKVPSKDAEEMRLFLDAVHQNRLPAAMKPSQGSGSFGAILGSRTSQKETSRQLSYSDNQASAKRGSLETKDDIPFRKVLGNPGRGSIKTVAGSGIARTIPSLTSTSTPLRSGLLENRTEKRKRMISTGSELNEDYPKENDSSSNNKAMTDPSRKYLTSSREKQLSLKQSEENRTSGLLPLQSSSFYGSRAGSKEHSSGGTNLDRTNVSSQTPSAKRSLGFLPQPVPLSVKKLRCNQDYTGWNKPRVPLSSHQQQQLQGFSNLGNTCYMNAILQSLFSLQSFANDLLKQGIPWKKIPLNALIRRFAHLLVKKDICNSETKKDLLKKVKNAISATAERFSGYMQNDAHEFLSQCLDQLKEDMEKLNKTWKTEPVSGEENSPDISATRAYTCPVITNLEFEVQHSIICKACGEIIPKREQFNDLSIDLPRRKKPLPPRSIQDSLDLFFRAEELEYSCEKCGGKCALVRHKFNRLPRVLILHLKRYSFNVALSLNNKIGQQVIIPRYLTLSSHCTENTKPPFTLGWSAHMAISRPLKASQMVNSCITSPSTPSKKFTFKSKSSLALCLDSDSEDELKRSVALSQRLCEMLGNEQQQEDLEKDSKLCPIEPDKSELENSGFDRMSEEELLAAVLEISKRDASPSLSHEDDDKPTSSPDTGFAEDDIQEMPENPDTMETEKPKTITELDPASFTEITKDCDENKENKTPEGSQGEVDWLQQYDMEREREEQELQQALAQSLQEQEAWEQKEDDDLKRATELSLQEFNNSFVDALGSDEDSGNEDVFDMEYTEAEAEELKRNAETGNLPHSYRLISVVSHIGSTSSSGHYISDVYDIKKQAWFTYNDLEVSKIQEAAVQSDRDRSGYIFFYMHKEIFDELLETEKNSQSLSTEVGKTTRQAL</sequence>
<organism>
    <name type="scientific">Homo sapiens</name>
    <name type="common">Human</name>
    <dbReference type="NCBI Taxonomy" id="9606"/>
    <lineage>
        <taxon>Eukaryota</taxon>
        <taxon>Metazoa</taxon>
        <taxon>Chordata</taxon>
        <taxon>Craniata</taxon>
        <taxon>Vertebrata</taxon>
        <taxon>Euteleostomi</taxon>
        <taxon>Mammalia</taxon>
        <taxon>Eutheria</taxon>
        <taxon>Euarchontoglires</taxon>
        <taxon>Primates</taxon>
        <taxon>Haplorrhini</taxon>
        <taxon>Catarrhini</taxon>
        <taxon>Hominidae</taxon>
        <taxon>Homo</taxon>
    </lineage>
</organism>
<proteinExistence type="evidence at protein level"/>
<feature type="chain" id="PRO_0000080667" description="Ubiquitin carboxyl-terminal hydrolase 37">
    <location>
        <begin position="1"/>
        <end position="979"/>
    </location>
</feature>
<feature type="domain" description="USP">
    <location>
        <begin position="341"/>
        <end position="951"/>
    </location>
</feature>
<feature type="domain" description="UIM 1" evidence="1">
    <location>
        <begin position="704"/>
        <end position="723"/>
    </location>
</feature>
<feature type="domain" description="UIM 2" evidence="1">
    <location>
        <begin position="806"/>
        <end position="825"/>
    </location>
</feature>
<feature type="domain" description="UIM 3" evidence="1">
    <location>
        <begin position="828"/>
        <end position="847"/>
    </location>
</feature>
<feature type="region of interest" description="Disordered" evidence="4">
    <location>
        <begin position="110"/>
        <end position="153"/>
    </location>
</feature>
<feature type="region of interest" description="Disordered" evidence="4">
    <location>
        <begin position="183"/>
        <end position="304"/>
    </location>
</feature>
<feature type="region of interest" description="Disordered" evidence="4">
    <location>
        <begin position="673"/>
        <end position="701"/>
    </location>
</feature>
<feature type="region of interest" description="Disordered" evidence="4">
    <location>
        <begin position="719"/>
        <end position="795"/>
    </location>
</feature>
<feature type="short sequence motif" description="KEN box 1">
    <location>
        <begin position="32"/>
        <end position="34"/>
    </location>
</feature>
<feature type="short sequence motif" description="D-box 1">
    <location>
        <begin position="71"/>
        <end position="79"/>
    </location>
</feature>
<feature type="short sequence motif" description="D-box 2">
    <location>
        <begin position="96"/>
        <end position="105"/>
    </location>
</feature>
<feature type="short sequence motif" description="D-box 3">
    <location>
        <begin position="160"/>
        <end position="168"/>
    </location>
</feature>
<feature type="short sequence motif" description="KEN box 2">
    <location>
        <begin position="221"/>
        <end position="223"/>
    </location>
</feature>
<feature type="short sequence motif" description="KEN box 3">
    <location>
        <begin position="782"/>
        <end position="784"/>
    </location>
</feature>
<feature type="compositionally biased region" description="Polar residues" evidence="4">
    <location>
        <begin position="135"/>
        <end position="145"/>
    </location>
</feature>
<feature type="compositionally biased region" description="Low complexity" evidence="4">
    <location>
        <begin position="183"/>
        <end position="198"/>
    </location>
</feature>
<feature type="compositionally biased region" description="Basic and acidic residues" evidence="4">
    <location>
        <begin position="243"/>
        <end position="257"/>
    </location>
</feature>
<feature type="compositionally biased region" description="Polar residues" evidence="4">
    <location>
        <begin position="281"/>
        <end position="298"/>
    </location>
</feature>
<feature type="compositionally biased region" description="Basic and acidic residues" evidence="4">
    <location>
        <begin position="681"/>
        <end position="695"/>
    </location>
</feature>
<feature type="compositionally biased region" description="Basic and acidic residues" evidence="4">
    <location>
        <begin position="719"/>
        <end position="732"/>
    </location>
</feature>
<feature type="compositionally biased region" description="Basic and acidic residues" evidence="4">
    <location>
        <begin position="774"/>
        <end position="786"/>
    </location>
</feature>
<feature type="active site" description="Nucleophile" evidence="11">
    <location>
        <position position="350"/>
    </location>
</feature>
<feature type="active site" description="Proton acceptor" evidence="2 3">
    <location>
        <position position="906"/>
    </location>
</feature>
<feature type="modified residue" description="Phosphoserine" evidence="14">
    <location>
        <position position="114"/>
    </location>
</feature>
<feature type="modified residue" description="Phosphoserine" evidence="19">
    <location>
        <position position="170"/>
    </location>
</feature>
<feature type="modified residue" description="Phosphoserine" evidence="19">
    <location>
        <position position="210"/>
    </location>
</feature>
<feature type="modified residue" description="Phosphoserine; by CDK2" evidence="9 11">
    <location>
        <position position="628"/>
    </location>
</feature>
<feature type="modified residue" description="Phosphoserine" evidence="18">
    <location>
        <position position="650"/>
    </location>
</feature>
<feature type="modified residue" description="Phosphoserine" evidence="18">
    <location>
        <position position="652"/>
    </location>
</feature>
<feature type="modified residue" description="Phosphoserine" evidence="19">
    <location>
        <position position="770"/>
    </location>
</feature>
<feature type="splice variant" id="VSP_041740" description="In isoform 2." evidence="16">
    <location>
        <begin position="1"/>
        <end position="72"/>
    </location>
</feature>
<feature type="splice variant" id="VSP_041741" description="In isoform 2." evidence="16">
    <original>ISRPLKASQMVNSCITSPSTPSK</original>
    <variation>M</variation>
    <location>
        <begin position="612"/>
        <end position="634"/>
    </location>
</feature>
<feature type="sequence variant" id="VAR_059752" description="In dbSNP:rs6436058." evidence="5 7 8 15">
    <original>L</original>
    <variation>S</variation>
    <location>
        <position position="979"/>
    </location>
</feature>
<feature type="mutagenesis site" description="No effect." evidence="9">
    <original>KEN</original>
    <variation>AAA</variation>
    <location>
        <begin position="32"/>
        <end position="34"/>
    </location>
</feature>
<feature type="mutagenesis site" description="No effect." evidence="9">
    <original>RLML</original>
    <variation>ALMA</variation>
    <location>
        <begin position="71"/>
        <end position="74"/>
    </location>
</feature>
<feature type="mutagenesis site" description="No effect." evidence="9">
    <original>RLFL</original>
    <variation>ALFA</variation>
    <location>
        <begin position="96"/>
        <end position="99"/>
    </location>
</feature>
<feature type="mutagenesis site" description="Loss of phosphorylation following cisplatin treatment." evidence="14">
    <original>S</original>
    <variation>A</variation>
    <location>
        <position position="114"/>
    </location>
</feature>
<feature type="mutagenesis site" description="No effect." evidence="9">
    <original>RKVL</original>
    <variation>AKVA</variation>
    <location>
        <begin position="160"/>
        <end position="163"/>
    </location>
</feature>
<feature type="mutagenesis site" description="No effect." evidence="9">
    <original>KEN</original>
    <variation>AAA</variation>
    <location>
        <begin position="221"/>
        <end position="223"/>
    </location>
</feature>
<feature type="mutagenesis site" description="Abolishes deubiquitinase activity." evidence="10">
    <original>C</original>
    <variation>A</variation>
    <location>
        <position position="350"/>
    </location>
</feature>
<feature type="mutagenesis site" description="Abolishes deubiquitinase activity." evidence="9">
    <original>C</original>
    <variation>S</variation>
    <location>
        <position position="350"/>
    </location>
</feature>
<feature type="mutagenesis site" description="Abolishes phosphorylation by CDK2, leading to lower deubiquitinase activity." evidence="9">
    <original>S</original>
    <variation>A</variation>
    <location>
        <position position="628"/>
    </location>
</feature>
<feature type="mutagenesis site" description="Impaired interaction with FZR1/CDH1 and subsequent ubiquitination." evidence="9">
    <original>KEN</original>
    <variation>AAA</variation>
    <location>
        <begin position="782"/>
        <end position="784"/>
    </location>
</feature>
<feature type="sequence conflict" description="In Ref. 1; CAD89955." evidence="17" ref="1">
    <original>ND</original>
    <variation>DG</variation>
    <location>
        <begin position="223"/>
        <end position="224"/>
    </location>
</feature>
<feature type="sequence conflict" description="In Ref. 1; CAD97970." evidence="17" ref="1">
    <original>N</original>
    <variation>K</variation>
    <location>
        <position position="345"/>
    </location>
</feature>
<feature type="sequence conflict" description="In Ref. 1; CAD89955." evidence="17" ref="1">
    <original>V</original>
    <variation>I</variation>
    <location>
        <position position="456"/>
    </location>
</feature>
<feature type="sequence conflict" description="In Ref. 4; AAI44250." evidence="17" ref="4">
    <original>F</original>
    <variation>I</variation>
    <location>
        <position position="552"/>
    </location>
</feature>
<feature type="sequence conflict" description="In Ref. 4; AAI44253." evidence="17" ref="4">
    <original>S</original>
    <variation>I</variation>
    <location>
        <position position="567"/>
    </location>
</feature>
<feature type="sequence conflict" description="In Ref. 4; AAI44253." evidence="17" ref="4">
    <original>N</original>
    <variation>Y</variation>
    <location>
        <position position="576"/>
    </location>
</feature>
<feature type="sequence conflict" description="In Ref. 1; CAD97970." evidence="17" ref="1">
    <original>K</original>
    <variation>E</variation>
    <location>
        <position position="731"/>
    </location>
</feature>
<feature type="sequence conflict" description="In Ref. 1; CAD97970." evidence="17" ref="1">
    <original>G</original>
    <variation>D</variation>
    <location>
        <position position="905"/>
    </location>
</feature>
<feature type="strand" evidence="20">
    <location>
        <begin position="5"/>
        <end position="14"/>
    </location>
</feature>
<feature type="turn" evidence="20">
    <location>
        <begin position="15"/>
        <end position="17"/>
    </location>
</feature>
<feature type="strand" evidence="20">
    <location>
        <begin position="23"/>
        <end position="32"/>
    </location>
</feature>
<feature type="strand" evidence="20">
    <location>
        <begin position="35"/>
        <end position="42"/>
    </location>
</feature>
<feature type="strand" evidence="20">
    <location>
        <begin position="49"/>
        <end position="52"/>
    </location>
</feature>
<feature type="turn" evidence="20">
    <location>
        <begin position="54"/>
        <end position="56"/>
    </location>
</feature>
<feature type="strand" evidence="20">
    <location>
        <begin position="57"/>
        <end position="64"/>
    </location>
</feature>
<feature type="strand" evidence="20">
    <location>
        <begin position="69"/>
        <end position="76"/>
    </location>
</feature>
<feature type="strand" evidence="20">
    <location>
        <begin position="81"/>
        <end position="88"/>
    </location>
</feature>
<feature type="helix" evidence="20">
    <location>
        <begin position="89"/>
        <end position="103"/>
    </location>
</feature>
<dbReference type="EC" id="3.4.19.12" evidence="10 11 12 14"/>
<dbReference type="EMBL" id="AL832645">
    <property type="protein sequence ID" value="CAD89955.1"/>
    <property type="molecule type" value="mRNA"/>
</dbReference>
<dbReference type="EMBL" id="BX538024">
    <property type="protein sequence ID" value="CAD97970.1"/>
    <property type="molecule type" value="mRNA"/>
</dbReference>
<dbReference type="EMBL" id="AC012510">
    <property type="status" value="NOT_ANNOTATED_CDS"/>
    <property type="molecule type" value="Genomic_DNA"/>
</dbReference>
<dbReference type="EMBL" id="AC073838">
    <property type="protein sequence ID" value="AAY14887.1"/>
    <property type="status" value="ALT_SEQ"/>
    <property type="molecule type" value="Genomic_DNA"/>
</dbReference>
<dbReference type="EMBL" id="CH471063">
    <property type="protein sequence ID" value="EAW70621.1"/>
    <property type="molecule type" value="Genomic_DNA"/>
</dbReference>
<dbReference type="EMBL" id="BC112901">
    <property type="protein sequence ID" value="AAI12902.1"/>
    <property type="molecule type" value="mRNA"/>
</dbReference>
<dbReference type="EMBL" id="BC133007">
    <property type="protein sequence ID" value="AAI33008.1"/>
    <property type="molecule type" value="mRNA"/>
</dbReference>
<dbReference type="EMBL" id="BC133009">
    <property type="protein sequence ID" value="AAI33010.1"/>
    <property type="molecule type" value="mRNA"/>
</dbReference>
<dbReference type="EMBL" id="BC144249">
    <property type="protein sequence ID" value="AAI44250.1"/>
    <property type="molecule type" value="mRNA"/>
</dbReference>
<dbReference type="EMBL" id="BC144252">
    <property type="protein sequence ID" value="AAI44253.1"/>
    <property type="molecule type" value="mRNA"/>
</dbReference>
<dbReference type="EMBL" id="AB046814">
    <property type="protein sequence ID" value="BAB13420.1"/>
    <property type="molecule type" value="mRNA"/>
</dbReference>
<dbReference type="CCDS" id="CCDS2418.1">
    <molecule id="Q86T82-1"/>
</dbReference>
<dbReference type="RefSeq" id="NP_065986.3">
    <molecule id="Q86T82-1"/>
    <property type="nucleotide sequence ID" value="NM_020935.3"/>
</dbReference>
<dbReference type="RefSeq" id="XP_005246777.1">
    <property type="nucleotide sequence ID" value="XM_005246720.2"/>
</dbReference>
<dbReference type="RefSeq" id="XP_005246778.1">
    <property type="nucleotide sequence ID" value="XM_005246721.3"/>
</dbReference>
<dbReference type="RefSeq" id="XP_005246779.1">
    <property type="nucleotide sequence ID" value="XM_005246722.3"/>
</dbReference>
<dbReference type="RefSeq" id="XP_011509840.1">
    <property type="nucleotide sequence ID" value="XM_011511538.2"/>
</dbReference>
<dbReference type="PDB" id="3U12">
    <property type="method" value="X-ray"/>
    <property type="resolution" value="2.08 A"/>
    <property type="chains" value="A/B=4-125"/>
</dbReference>
<dbReference type="PDBsum" id="3U12"/>
<dbReference type="SMR" id="Q86T82"/>
<dbReference type="BioGRID" id="121720">
    <property type="interactions" value="116"/>
</dbReference>
<dbReference type="FunCoup" id="Q86T82">
    <property type="interactions" value="3806"/>
</dbReference>
<dbReference type="IntAct" id="Q86T82">
    <property type="interactions" value="5"/>
</dbReference>
<dbReference type="MINT" id="Q86T82"/>
<dbReference type="STRING" id="9606.ENSP00000258399"/>
<dbReference type="MEROPS" id="C19.053"/>
<dbReference type="GlyGen" id="Q86T82">
    <property type="glycosylation" value="4 sites, 1 N-linked glycan (1 site), 1 O-linked glycan (2 sites)"/>
</dbReference>
<dbReference type="iPTMnet" id="Q86T82"/>
<dbReference type="PhosphoSitePlus" id="Q86T82"/>
<dbReference type="BioMuta" id="USP37"/>
<dbReference type="DMDM" id="300669620"/>
<dbReference type="jPOST" id="Q86T82"/>
<dbReference type="MassIVE" id="Q86T82"/>
<dbReference type="PaxDb" id="9606-ENSP00000258399"/>
<dbReference type="PeptideAtlas" id="Q86T82"/>
<dbReference type="ProteomicsDB" id="69667">
    <molecule id="Q86T82-1"/>
</dbReference>
<dbReference type="ProteomicsDB" id="69668">
    <molecule id="Q86T82-2"/>
</dbReference>
<dbReference type="Pumba" id="Q86T82"/>
<dbReference type="Antibodypedia" id="34273">
    <property type="antibodies" value="163 antibodies from 26 providers"/>
</dbReference>
<dbReference type="DNASU" id="57695"/>
<dbReference type="Ensembl" id="ENST00000258399.8">
    <molecule id="Q86T82-1"/>
    <property type="protein sequence ID" value="ENSP00000258399.3"/>
    <property type="gene ID" value="ENSG00000135913.11"/>
</dbReference>
<dbReference type="Ensembl" id="ENST00000415516.5">
    <molecule id="Q86T82-2"/>
    <property type="protein sequence ID" value="ENSP00000400902.1"/>
    <property type="gene ID" value="ENSG00000135913.11"/>
</dbReference>
<dbReference type="Ensembl" id="ENST00000418019.5">
    <molecule id="Q86T82-1"/>
    <property type="protein sequence ID" value="ENSP00000396585.1"/>
    <property type="gene ID" value="ENSG00000135913.11"/>
</dbReference>
<dbReference type="Ensembl" id="ENST00000454775.5">
    <molecule id="Q86T82-1"/>
    <property type="protein sequence ID" value="ENSP00000393662.1"/>
    <property type="gene ID" value="ENSG00000135913.11"/>
</dbReference>
<dbReference type="GeneID" id="57695"/>
<dbReference type="KEGG" id="hsa:57695"/>
<dbReference type="MANE-Select" id="ENST00000258399.8">
    <property type="protein sequence ID" value="ENSP00000258399.3"/>
    <property type="RefSeq nucleotide sequence ID" value="NM_020935.3"/>
    <property type="RefSeq protein sequence ID" value="NP_065986.3"/>
</dbReference>
<dbReference type="UCSC" id="uc002vie.3">
    <molecule id="Q86T82-1"/>
    <property type="organism name" value="human"/>
</dbReference>
<dbReference type="AGR" id="HGNC:20063"/>
<dbReference type="CTD" id="57695"/>
<dbReference type="DisGeNET" id="57695"/>
<dbReference type="GeneCards" id="USP37"/>
<dbReference type="HGNC" id="HGNC:20063">
    <property type="gene designation" value="USP37"/>
</dbReference>
<dbReference type="HPA" id="ENSG00000135913">
    <property type="expression patterns" value="Low tissue specificity"/>
</dbReference>
<dbReference type="MIM" id="620226">
    <property type="type" value="gene"/>
</dbReference>
<dbReference type="neXtProt" id="NX_Q86T82"/>
<dbReference type="OpenTargets" id="ENSG00000135913"/>
<dbReference type="PharmGKB" id="PA134928706"/>
<dbReference type="VEuPathDB" id="HostDB:ENSG00000135913"/>
<dbReference type="eggNOG" id="KOG1868">
    <property type="taxonomic scope" value="Eukaryota"/>
</dbReference>
<dbReference type="GeneTree" id="ENSGT00940000158091"/>
<dbReference type="HOGENOM" id="CLU_012557_0_0_1"/>
<dbReference type="InParanoid" id="Q86T82"/>
<dbReference type="OMA" id="CGEVVNK"/>
<dbReference type="OrthoDB" id="289038at2759"/>
<dbReference type="PAN-GO" id="Q86T82">
    <property type="GO annotations" value="6 GO annotations based on evolutionary models"/>
</dbReference>
<dbReference type="PhylomeDB" id="Q86T82"/>
<dbReference type="TreeFam" id="TF323032"/>
<dbReference type="PathwayCommons" id="Q86T82"/>
<dbReference type="Reactome" id="R-HSA-5689880">
    <property type="pathway name" value="Ub-specific processing proteases"/>
</dbReference>
<dbReference type="SignaLink" id="Q86T82"/>
<dbReference type="SIGNOR" id="Q86T82"/>
<dbReference type="BioGRID-ORCS" id="57695">
    <property type="hits" value="553 hits in 1175 CRISPR screens"/>
</dbReference>
<dbReference type="ChiTaRS" id="USP37">
    <property type="organism name" value="human"/>
</dbReference>
<dbReference type="EvolutionaryTrace" id="Q86T82"/>
<dbReference type="GeneWiki" id="USP37"/>
<dbReference type="GenomeRNAi" id="57695"/>
<dbReference type="Pharos" id="Q86T82">
    <property type="development level" value="Tbio"/>
</dbReference>
<dbReference type="PRO" id="PR:Q86T82"/>
<dbReference type="Proteomes" id="UP000005640">
    <property type="component" value="Chromosome 2"/>
</dbReference>
<dbReference type="RNAct" id="Q86T82">
    <property type="molecule type" value="protein"/>
</dbReference>
<dbReference type="Bgee" id="ENSG00000135913">
    <property type="expression patterns" value="Expressed in secondary oocyte and 195 other cell types or tissues"/>
</dbReference>
<dbReference type="ExpressionAtlas" id="Q86T82">
    <property type="expression patterns" value="baseline and differential"/>
</dbReference>
<dbReference type="GO" id="GO:0005694">
    <property type="term" value="C:chromosome"/>
    <property type="evidence" value="ECO:0007669"/>
    <property type="project" value="UniProtKB-SubCell"/>
</dbReference>
<dbReference type="GO" id="GO:0005829">
    <property type="term" value="C:cytosol"/>
    <property type="evidence" value="ECO:0000318"/>
    <property type="project" value="GO_Central"/>
</dbReference>
<dbReference type="GO" id="GO:0005654">
    <property type="term" value="C:nucleoplasm"/>
    <property type="evidence" value="ECO:0000304"/>
    <property type="project" value="Reactome"/>
</dbReference>
<dbReference type="GO" id="GO:0005634">
    <property type="term" value="C:nucleus"/>
    <property type="evidence" value="ECO:0000314"/>
    <property type="project" value="LIFEdb"/>
</dbReference>
<dbReference type="GO" id="GO:0004843">
    <property type="term" value="F:cysteine-type deubiquitinase activity"/>
    <property type="evidence" value="ECO:0000314"/>
    <property type="project" value="UniProtKB"/>
</dbReference>
<dbReference type="GO" id="GO:0004197">
    <property type="term" value="F:cysteine-type endopeptidase activity"/>
    <property type="evidence" value="ECO:0000314"/>
    <property type="project" value="UniProtKB"/>
</dbReference>
<dbReference type="GO" id="GO:0019901">
    <property type="term" value="F:protein kinase binding"/>
    <property type="evidence" value="ECO:0000353"/>
    <property type="project" value="UniProtKB"/>
</dbReference>
<dbReference type="GO" id="GO:0051301">
    <property type="term" value="P:cell division"/>
    <property type="evidence" value="ECO:0007669"/>
    <property type="project" value="UniProtKB-KW"/>
</dbReference>
<dbReference type="GO" id="GO:0000082">
    <property type="term" value="P:G1/S transition of mitotic cell cycle"/>
    <property type="evidence" value="ECO:0000314"/>
    <property type="project" value="UniProtKB"/>
</dbReference>
<dbReference type="GO" id="GO:0016579">
    <property type="term" value="P:protein deubiquitination"/>
    <property type="evidence" value="ECO:0000315"/>
    <property type="project" value="UniProtKB"/>
</dbReference>
<dbReference type="GO" id="GO:0035871">
    <property type="term" value="P:protein K11-linked deubiquitination"/>
    <property type="evidence" value="ECO:0000314"/>
    <property type="project" value="UniProtKB"/>
</dbReference>
<dbReference type="GO" id="GO:0071108">
    <property type="term" value="P:protein K48-linked deubiquitination"/>
    <property type="evidence" value="ECO:0000314"/>
    <property type="project" value="UniProtKB"/>
</dbReference>
<dbReference type="GO" id="GO:0006508">
    <property type="term" value="P:proteolysis"/>
    <property type="evidence" value="ECO:0007669"/>
    <property type="project" value="UniProtKB-KW"/>
</dbReference>
<dbReference type="GO" id="GO:0006275">
    <property type="term" value="P:regulation of DNA replication"/>
    <property type="evidence" value="ECO:0000315"/>
    <property type="project" value="UniProtKB"/>
</dbReference>
<dbReference type="GO" id="GO:0031647">
    <property type="term" value="P:regulation of protein stability"/>
    <property type="evidence" value="ECO:0000318"/>
    <property type="project" value="GO_Central"/>
</dbReference>
<dbReference type="CDD" id="cd02257">
    <property type="entry name" value="Peptidase_C19"/>
    <property type="match status" value="2"/>
</dbReference>
<dbReference type="CDD" id="cd13312">
    <property type="entry name" value="PH_USP37_like"/>
    <property type="match status" value="1"/>
</dbReference>
<dbReference type="FunFam" id="2.30.29.180:FF:000001">
    <property type="entry name" value="Ubiquitin carboxyl-terminal hydrolase 37"/>
    <property type="match status" value="1"/>
</dbReference>
<dbReference type="FunFam" id="3.90.70.10:FF:000040">
    <property type="entry name" value="Ubiquitin carboxyl-terminal hydrolase 37"/>
    <property type="match status" value="1"/>
</dbReference>
<dbReference type="FunFam" id="3.90.70.10:FF:000287">
    <property type="entry name" value="Ubiquitin specific peptidase 37"/>
    <property type="match status" value="1"/>
</dbReference>
<dbReference type="Gene3D" id="3.90.70.10">
    <property type="entry name" value="Cysteine proteinases"/>
    <property type="match status" value="2"/>
</dbReference>
<dbReference type="Gene3D" id="2.30.29.180">
    <property type="entry name" value="Ubiquitin carboxyl-terminal hydrolase 26/29/37, pleckstrin homology-like domain"/>
    <property type="match status" value="1"/>
</dbReference>
<dbReference type="InterPro" id="IPR038765">
    <property type="entry name" value="Papain-like_cys_pep_sf"/>
</dbReference>
<dbReference type="InterPro" id="IPR050164">
    <property type="entry name" value="Peptidase_C19"/>
</dbReference>
<dbReference type="InterPro" id="IPR001394">
    <property type="entry name" value="Peptidase_C19_UCH"/>
</dbReference>
<dbReference type="InterPro" id="IPR003903">
    <property type="entry name" value="UIM_dom"/>
</dbReference>
<dbReference type="InterPro" id="IPR032069">
    <property type="entry name" value="USP37-like_PH"/>
</dbReference>
<dbReference type="InterPro" id="IPR038093">
    <property type="entry name" value="USP37-like_PH_sf"/>
</dbReference>
<dbReference type="InterPro" id="IPR018200">
    <property type="entry name" value="USP_CS"/>
</dbReference>
<dbReference type="InterPro" id="IPR028889">
    <property type="entry name" value="USP_dom"/>
</dbReference>
<dbReference type="PANTHER" id="PTHR24006">
    <property type="entry name" value="UBIQUITIN CARBOXYL-TERMINAL HYDROLASE"/>
    <property type="match status" value="1"/>
</dbReference>
<dbReference type="PANTHER" id="PTHR24006:SF686">
    <property type="entry name" value="UBIQUITIN CARBOXYL-TERMINAL HYDROLASE 37"/>
    <property type="match status" value="1"/>
</dbReference>
<dbReference type="Pfam" id="PF00443">
    <property type="entry name" value="UCH"/>
    <property type="match status" value="1"/>
</dbReference>
<dbReference type="Pfam" id="PF16674">
    <property type="entry name" value="UCH_N"/>
    <property type="match status" value="1"/>
</dbReference>
<dbReference type="Pfam" id="PF02809">
    <property type="entry name" value="UIM"/>
    <property type="match status" value="3"/>
</dbReference>
<dbReference type="SMART" id="SM00726">
    <property type="entry name" value="UIM"/>
    <property type="match status" value="4"/>
</dbReference>
<dbReference type="SUPFAM" id="SSF54001">
    <property type="entry name" value="Cysteine proteinases"/>
    <property type="match status" value="1"/>
</dbReference>
<dbReference type="PROSITE" id="PS50330">
    <property type="entry name" value="UIM"/>
    <property type="match status" value="3"/>
</dbReference>
<dbReference type="PROSITE" id="PS00972">
    <property type="entry name" value="USP_1"/>
    <property type="match status" value="1"/>
</dbReference>
<dbReference type="PROSITE" id="PS00973">
    <property type="entry name" value="USP_2"/>
    <property type="match status" value="1"/>
</dbReference>
<dbReference type="PROSITE" id="PS50235">
    <property type="entry name" value="USP_3"/>
    <property type="match status" value="1"/>
</dbReference>
<comment type="function">
    <text evidence="9 10 11 12 13 14">Deubiquitinase that plays a role in different processes including cell cycle regulation, DNA replication or DNA damage response (PubMed:26299517, PubMed:27296872, PubMed:31911859, PubMed:34509474). Antagonizes the anaphase-promoting complex (APC/C) during G1/S transition by mediating deubiquitination of cyclin-A (CCNA1 and CCNA2), thereby promoting S phase entry. Specifically mediates deubiquitination of 'Lys-11'-linked polyubiquitin chains, a specific ubiquitin-linkage type mediated by the APC/C complex. Phosphorylation at Ser-628 during G1/S phase maximizes the deubiquitinase activity, leading to prevent degradation of cyclin-A (CCNA1 and CCNA2) (PubMed:21596315). Plays an important role in the regulation of DNA replication by stabilizing the licensing factor CDT1 (PubMed:27296872). Also plays an essential role beyond S-phase entry to promote the efficiency and fidelity of replication by deubiquitinating checkpoint kinase 1/CHK1, promoting its stability (PubMed:34509474). Sustains the DNA damage response (DDR) by deubiquitinating and stabilizing the ATP-dependent DNA helicase BLM (PubMed:34606619). Mechanistically, DNA double-strand breaks (DSB) promotes ATM-mediated phosphorylation of USP37 and enhances the binding between USP37 and BLM (PubMed:34606619). Promotes cell migration by deubiquitinating and stabilizing the epithelial-mesenchymal transition (EMT)-inducing transcription factor SNAI (PubMed:31911859). Plays a role in the regulation of mitotic spindle assembly and mitotic progression by associating with chromatin-associated WAPL and stabilizing it through deubiquitination (PubMed:26299517).</text>
</comment>
<comment type="catalytic activity">
    <reaction evidence="6 10 11 12 14">
        <text>Thiol-dependent hydrolysis of ester, thioester, amide, peptide and isopeptide bonds formed by the C-terminal Gly of ubiquitin (a 76-residue protein attached to proteins as an intracellular targeting signal).</text>
        <dbReference type="EC" id="3.4.19.12"/>
    </reaction>
</comment>
<comment type="subunit">
    <text evidence="9 11">Interacts with FZR1/CDH1 (PubMed:21596315). Interacts with CDT1 (PubMed:27296872).</text>
</comment>
<comment type="subcellular location">
    <subcellularLocation>
        <location evidence="10">Nucleus</location>
    </subcellularLocation>
    <subcellularLocation>
        <location evidence="10">Chromosome</location>
    </subcellularLocation>
</comment>
<comment type="alternative products">
    <event type="alternative splicing"/>
    <isoform>
        <id>Q86T82-1</id>
        <name>1</name>
        <sequence type="displayed"/>
    </isoform>
    <isoform>
        <id>Q86T82-2</id>
        <name>2</name>
        <sequence type="described" ref="VSP_041740 VSP_041741"/>
    </isoform>
</comment>
<comment type="tissue specificity">
    <text evidence="6">Expressed in brain and prostate.</text>
</comment>
<comment type="developmental stage">
    <text evidence="9">Induced in G1 phase, accumulates at G1/S transition, and degraded in late mitosis following ubiquitination and degradation by the APC(CDH1) complex.</text>
</comment>
<comment type="induction">
    <text evidence="9">Induced by E2F transcription factors in G1.</text>
</comment>
<comment type="domain">
    <text evidence="9">The KEN box 3 is required for interaction with FZR1/CDH1 and is essential for APC(CDH1)-mediated ubiquitination.</text>
</comment>
<comment type="PTM">
    <text evidence="9">Polyubiquitinated via 'Lys-11'-linked ubiquitin by the APC(CDH1) complex during late mitosis, leading to its degradation. Able to mediate auto-deubiquitination.</text>
</comment>
<comment type="PTM">
    <text evidence="9 14">Phosphorylated at Ser-628 by CDK2 during G1/S phase but not during mitosis; phosphorylation at Ser-628 is required for deubiquitinase activity. Also polyubiquitinated during early G1 phase, without leading to degradation (PubMed:21596315). Phosphorylated at Ser-114 by ATM following DNA damage, which in turn increases its deubiquitination activity towards BLM (PubMed:34606619).</text>
</comment>
<comment type="similarity">
    <text evidence="17">Belongs to the peptidase C19 family.</text>
</comment>
<comment type="sequence caution" evidence="17">
    <conflict type="erroneous gene model prediction">
        <sequence resource="EMBL-CDS" id="AAY14887"/>
    </conflict>
</comment>
<evidence type="ECO:0000255" key="1">
    <source>
        <dbReference type="PROSITE-ProRule" id="PRU00213"/>
    </source>
</evidence>
<evidence type="ECO:0000255" key="2">
    <source>
        <dbReference type="PROSITE-ProRule" id="PRU10092"/>
    </source>
</evidence>
<evidence type="ECO:0000255" key="3">
    <source>
        <dbReference type="PROSITE-ProRule" id="PRU10093"/>
    </source>
</evidence>
<evidence type="ECO:0000256" key="4">
    <source>
        <dbReference type="SAM" id="MobiDB-lite"/>
    </source>
</evidence>
<evidence type="ECO:0000269" key="5">
    <source>
    </source>
</evidence>
<evidence type="ECO:0000269" key="6">
    <source>
    </source>
</evidence>
<evidence type="ECO:0000269" key="7">
    <source>
    </source>
</evidence>
<evidence type="ECO:0000269" key="8">
    <source>
    </source>
</evidence>
<evidence type="ECO:0000269" key="9">
    <source>
    </source>
</evidence>
<evidence type="ECO:0000269" key="10">
    <source>
    </source>
</evidence>
<evidence type="ECO:0000269" key="11">
    <source>
    </source>
</evidence>
<evidence type="ECO:0000269" key="12">
    <source>
    </source>
</evidence>
<evidence type="ECO:0000269" key="13">
    <source>
    </source>
</evidence>
<evidence type="ECO:0000269" key="14">
    <source>
    </source>
</evidence>
<evidence type="ECO:0000269" key="15">
    <source ref="3"/>
</evidence>
<evidence type="ECO:0000303" key="16">
    <source>
    </source>
</evidence>
<evidence type="ECO:0000305" key="17"/>
<evidence type="ECO:0007744" key="18">
    <source>
    </source>
</evidence>
<evidence type="ECO:0007744" key="19">
    <source>
    </source>
</evidence>
<evidence type="ECO:0007829" key="20">
    <source>
        <dbReference type="PDB" id="3U12"/>
    </source>
</evidence>